<name>SLYX_SHESW</name>
<dbReference type="EMBL" id="CP000503">
    <property type="protein sequence ID" value="ABM23787.1"/>
    <property type="molecule type" value="Genomic_DNA"/>
</dbReference>
<dbReference type="RefSeq" id="WP_011788313.1">
    <property type="nucleotide sequence ID" value="NC_008750.1"/>
</dbReference>
<dbReference type="SMR" id="A1RGJ2"/>
<dbReference type="KEGG" id="shw:Sputw3181_0937"/>
<dbReference type="HOGENOM" id="CLU_180796_4_2_6"/>
<dbReference type="Proteomes" id="UP000002597">
    <property type="component" value="Chromosome"/>
</dbReference>
<dbReference type="HAMAP" id="MF_00715">
    <property type="entry name" value="SlyX"/>
    <property type="match status" value="1"/>
</dbReference>
<dbReference type="InterPro" id="IPR007236">
    <property type="entry name" value="SlyX"/>
</dbReference>
<dbReference type="PANTHER" id="PTHR36508">
    <property type="entry name" value="PROTEIN SLYX"/>
    <property type="match status" value="1"/>
</dbReference>
<dbReference type="PANTHER" id="PTHR36508:SF1">
    <property type="entry name" value="PROTEIN SLYX"/>
    <property type="match status" value="1"/>
</dbReference>
<dbReference type="Pfam" id="PF04102">
    <property type="entry name" value="SlyX"/>
    <property type="match status" value="1"/>
</dbReference>
<protein>
    <recommendedName>
        <fullName evidence="1">Protein SlyX homolog</fullName>
    </recommendedName>
</protein>
<feature type="chain" id="PRO_1000045741" description="Protein SlyX homolog">
    <location>
        <begin position="1"/>
        <end position="70"/>
    </location>
</feature>
<comment type="similarity">
    <text evidence="1">Belongs to the SlyX family.</text>
</comment>
<sequence length="70" mass="8056">MQGVQEQIEELQTKLAFQELTVEELNQEVIKLNRLVAYQQHQIQLLVGKLQAMEPSNIATQAEETPPPHY</sequence>
<evidence type="ECO:0000255" key="1">
    <source>
        <dbReference type="HAMAP-Rule" id="MF_00715"/>
    </source>
</evidence>
<organism>
    <name type="scientific">Shewanella sp. (strain W3-18-1)</name>
    <dbReference type="NCBI Taxonomy" id="351745"/>
    <lineage>
        <taxon>Bacteria</taxon>
        <taxon>Pseudomonadati</taxon>
        <taxon>Pseudomonadota</taxon>
        <taxon>Gammaproteobacteria</taxon>
        <taxon>Alteromonadales</taxon>
        <taxon>Shewanellaceae</taxon>
        <taxon>Shewanella</taxon>
    </lineage>
</organism>
<proteinExistence type="inferred from homology"/>
<gene>
    <name evidence="1" type="primary">slyX</name>
    <name type="ordered locus">Sputw3181_0937</name>
</gene>
<accession>A1RGJ2</accession>
<reference key="1">
    <citation type="submission" date="2006-12" db="EMBL/GenBank/DDBJ databases">
        <title>Complete sequence of Shewanella sp. W3-18-1.</title>
        <authorList>
            <consortium name="US DOE Joint Genome Institute"/>
            <person name="Copeland A."/>
            <person name="Lucas S."/>
            <person name="Lapidus A."/>
            <person name="Barry K."/>
            <person name="Detter J.C."/>
            <person name="Glavina del Rio T."/>
            <person name="Hammon N."/>
            <person name="Israni S."/>
            <person name="Dalin E."/>
            <person name="Tice H."/>
            <person name="Pitluck S."/>
            <person name="Chain P."/>
            <person name="Malfatti S."/>
            <person name="Shin M."/>
            <person name="Vergez L."/>
            <person name="Schmutz J."/>
            <person name="Larimer F."/>
            <person name="Land M."/>
            <person name="Hauser L."/>
            <person name="Kyrpides N."/>
            <person name="Lykidis A."/>
            <person name="Tiedje J."/>
            <person name="Richardson P."/>
        </authorList>
    </citation>
    <scope>NUCLEOTIDE SEQUENCE [LARGE SCALE GENOMIC DNA]</scope>
    <source>
        <strain>W3-18-1</strain>
    </source>
</reference>